<organism>
    <name type="scientific">Xanthomonas campestris pv. campestris (strain 8004)</name>
    <dbReference type="NCBI Taxonomy" id="314565"/>
    <lineage>
        <taxon>Bacteria</taxon>
        <taxon>Pseudomonadati</taxon>
        <taxon>Pseudomonadota</taxon>
        <taxon>Gammaproteobacteria</taxon>
        <taxon>Lysobacterales</taxon>
        <taxon>Lysobacteraceae</taxon>
        <taxon>Xanthomonas</taxon>
    </lineage>
</organism>
<evidence type="ECO:0000255" key="1">
    <source>
        <dbReference type="HAMAP-Rule" id="MF_01343"/>
    </source>
</evidence>
<evidence type="ECO:0000256" key="2">
    <source>
        <dbReference type="SAM" id="MobiDB-lite"/>
    </source>
</evidence>
<evidence type="ECO:0000305" key="3"/>
<sequence>MSVDTQKVIEDNKRSAQDTGSPEVQVALLTARIELLTGHFKTHKKDHHSRRGLLQMVNRRRSLLDYLKKKDGERYKSLIEKLGLRR</sequence>
<accession>Q4UW99</accession>
<proteinExistence type="inferred from homology"/>
<gene>
    <name evidence="1" type="primary">rpsO</name>
    <name type="ordered locus">XC_1608</name>
</gene>
<protein>
    <recommendedName>
        <fullName evidence="1">Small ribosomal subunit protein uS15</fullName>
    </recommendedName>
    <alternativeName>
        <fullName evidence="3">30S ribosomal protein S15</fullName>
    </alternativeName>
</protein>
<keyword id="KW-0687">Ribonucleoprotein</keyword>
<keyword id="KW-0689">Ribosomal protein</keyword>
<keyword id="KW-0694">RNA-binding</keyword>
<keyword id="KW-0699">rRNA-binding</keyword>
<dbReference type="EMBL" id="CP000050">
    <property type="protein sequence ID" value="AAY48674.1"/>
    <property type="molecule type" value="Genomic_DNA"/>
</dbReference>
<dbReference type="RefSeq" id="WP_011037641.1">
    <property type="nucleotide sequence ID" value="NZ_CP155948.1"/>
</dbReference>
<dbReference type="SMR" id="Q4UW99"/>
<dbReference type="GeneID" id="58012886"/>
<dbReference type="KEGG" id="xcb:XC_1608"/>
<dbReference type="HOGENOM" id="CLU_148518_1_0_6"/>
<dbReference type="Proteomes" id="UP000000420">
    <property type="component" value="Chromosome"/>
</dbReference>
<dbReference type="GO" id="GO:0022627">
    <property type="term" value="C:cytosolic small ribosomal subunit"/>
    <property type="evidence" value="ECO:0007669"/>
    <property type="project" value="TreeGrafter"/>
</dbReference>
<dbReference type="GO" id="GO:0019843">
    <property type="term" value="F:rRNA binding"/>
    <property type="evidence" value="ECO:0007669"/>
    <property type="project" value="UniProtKB-UniRule"/>
</dbReference>
<dbReference type="GO" id="GO:0003735">
    <property type="term" value="F:structural constituent of ribosome"/>
    <property type="evidence" value="ECO:0007669"/>
    <property type="project" value="InterPro"/>
</dbReference>
<dbReference type="GO" id="GO:0006412">
    <property type="term" value="P:translation"/>
    <property type="evidence" value="ECO:0007669"/>
    <property type="project" value="UniProtKB-UniRule"/>
</dbReference>
<dbReference type="CDD" id="cd00353">
    <property type="entry name" value="Ribosomal_S15p_S13e"/>
    <property type="match status" value="1"/>
</dbReference>
<dbReference type="FunFam" id="1.10.287.10:FF:000002">
    <property type="entry name" value="30S ribosomal protein S15"/>
    <property type="match status" value="1"/>
</dbReference>
<dbReference type="Gene3D" id="6.10.250.3130">
    <property type="match status" value="1"/>
</dbReference>
<dbReference type="Gene3D" id="1.10.287.10">
    <property type="entry name" value="S15/NS1, RNA-binding"/>
    <property type="match status" value="1"/>
</dbReference>
<dbReference type="HAMAP" id="MF_01343_B">
    <property type="entry name" value="Ribosomal_uS15_B"/>
    <property type="match status" value="1"/>
</dbReference>
<dbReference type="InterPro" id="IPR000589">
    <property type="entry name" value="Ribosomal_uS15"/>
</dbReference>
<dbReference type="InterPro" id="IPR005290">
    <property type="entry name" value="Ribosomal_uS15_bac-type"/>
</dbReference>
<dbReference type="InterPro" id="IPR009068">
    <property type="entry name" value="uS15_NS1_RNA-bd_sf"/>
</dbReference>
<dbReference type="NCBIfam" id="TIGR00952">
    <property type="entry name" value="S15_bact"/>
    <property type="match status" value="1"/>
</dbReference>
<dbReference type="PANTHER" id="PTHR23321">
    <property type="entry name" value="RIBOSOMAL PROTEIN S15, BACTERIAL AND ORGANELLAR"/>
    <property type="match status" value="1"/>
</dbReference>
<dbReference type="PANTHER" id="PTHR23321:SF26">
    <property type="entry name" value="SMALL RIBOSOMAL SUBUNIT PROTEIN US15M"/>
    <property type="match status" value="1"/>
</dbReference>
<dbReference type="Pfam" id="PF00312">
    <property type="entry name" value="Ribosomal_S15"/>
    <property type="match status" value="1"/>
</dbReference>
<dbReference type="SMART" id="SM01387">
    <property type="entry name" value="Ribosomal_S15"/>
    <property type="match status" value="1"/>
</dbReference>
<dbReference type="SUPFAM" id="SSF47060">
    <property type="entry name" value="S15/NS1 RNA-binding domain"/>
    <property type="match status" value="1"/>
</dbReference>
<dbReference type="PROSITE" id="PS00362">
    <property type="entry name" value="RIBOSOMAL_S15"/>
    <property type="match status" value="1"/>
</dbReference>
<feature type="chain" id="PRO_0000115592" description="Small ribosomal subunit protein uS15">
    <location>
        <begin position="1"/>
        <end position="86"/>
    </location>
</feature>
<feature type="region of interest" description="Disordered" evidence="2">
    <location>
        <begin position="1"/>
        <end position="22"/>
    </location>
</feature>
<feature type="compositionally biased region" description="Basic and acidic residues" evidence="2">
    <location>
        <begin position="7"/>
        <end position="16"/>
    </location>
</feature>
<reference key="1">
    <citation type="journal article" date="2005" name="Genome Res.">
        <title>Comparative and functional genomic analyses of the pathogenicity of phytopathogen Xanthomonas campestris pv. campestris.</title>
        <authorList>
            <person name="Qian W."/>
            <person name="Jia Y."/>
            <person name="Ren S.-X."/>
            <person name="He Y.-Q."/>
            <person name="Feng J.-X."/>
            <person name="Lu L.-F."/>
            <person name="Sun Q."/>
            <person name="Ying G."/>
            <person name="Tang D.-J."/>
            <person name="Tang H."/>
            <person name="Wu W."/>
            <person name="Hao P."/>
            <person name="Wang L."/>
            <person name="Jiang B.-L."/>
            <person name="Zeng S."/>
            <person name="Gu W.-Y."/>
            <person name="Lu G."/>
            <person name="Rong L."/>
            <person name="Tian Y."/>
            <person name="Yao Z."/>
            <person name="Fu G."/>
            <person name="Chen B."/>
            <person name="Fang R."/>
            <person name="Qiang B."/>
            <person name="Chen Z."/>
            <person name="Zhao G.-P."/>
            <person name="Tang J.-L."/>
            <person name="He C."/>
        </authorList>
    </citation>
    <scope>NUCLEOTIDE SEQUENCE [LARGE SCALE GENOMIC DNA]</scope>
    <source>
        <strain>8004</strain>
    </source>
</reference>
<name>RS15_XANC8</name>
<comment type="function">
    <text evidence="1">One of the primary rRNA binding proteins, it binds directly to 16S rRNA where it helps nucleate assembly of the platform of the 30S subunit by binding and bridging several RNA helices of the 16S rRNA.</text>
</comment>
<comment type="function">
    <text evidence="1">Forms an intersubunit bridge (bridge B4) with the 23S rRNA of the 50S subunit in the ribosome.</text>
</comment>
<comment type="subunit">
    <text evidence="1">Part of the 30S ribosomal subunit. Forms a bridge to the 50S subunit in the 70S ribosome, contacting the 23S rRNA.</text>
</comment>
<comment type="similarity">
    <text evidence="1">Belongs to the universal ribosomal protein uS15 family.</text>
</comment>